<dbReference type="EC" id="2.5.1.-" evidence="1"/>
<dbReference type="EMBL" id="AE016827">
    <property type="protein sequence ID" value="AAU37383.1"/>
    <property type="molecule type" value="Genomic_DNA"/>
</dbReference>
<dbReference type="RefSeq" id="WP_011199955.1">
    <property type="nucleotide sequence ID" value="NC_006300.1"/>
</dbReference>
<dbReference type="SMR" id="Q65UH7"/>
<dbReference type="STRING" id="221988.MS0776"/>
<dbReference type="KEGG" id="msu:MS0776"/>
<dbReference type="eggNOG" id="COG0500">
    <property type="taxonomic scope" value="Bacteria"/>
</dbReference>
<dbReference type="HOGENOM" id="CLU_052665_0_0_6"/>
<dbReference type="OrthoDB" id="9773188at2"/>
<dbReference type="Proteomes" id="UP000000607">
    <property type="component" value="Chromosome"/>
</dbReference>
<dbReference type="GO" id="GO:0008168">
    <property type="term" value="F:methyltransferase activity"/>
    <property type="evidence" value="ECO:0007669"/>
    <property type="project" value="TreeGrafter"/>
</dbReference>
<dbReference type="GO" id="GO:0016765">
    <property type="term" value="F:transferase activity, transferring alkyl or aryl (other than methyl) groups"/>
    <property type="evidence" value="ECO:0007669"/>
    <property type="project" value="UniProtKB-UniRule"/>
</dbReference>
<dbReference type="GO" id="GO:0002098">
    <property type="term" value="P:tRNA wobble uridine modification"/>
    <property type="evidence" value="ECO:0007669"/>
    <property type="project" value="InterPro"/>
</dbReference>
<dbReference type="CDD" id="cd02440">
    <property type="entry name" value="AdoMet_MTases"/>
    <property type="match status" value="1"/>
</dbReference>
<dbReference type="Gene3D" id="3.40.50.150">
    <property type="entry name" value="Vaccinia Virus protein VP39"/>
    <property type="match status" value="1"/>
</dbReference>
<dbReference type="HAMAP" id="MF_01590">
    <property type="entry name" value="tRNA_carboxymethyltr_CmoB"/>
    <property type="match status" value="1"/>
</dbReference>
<dbReference type="InterPro" id="IPR010017">
    <property type="entry name" value="CmoB"/>
</dbReference>
<dbReference type="InterPro" id="IPR027555">
    <property type="entry name" value="Mo5U34_MeTrfas-like"/>
</dbReference>
<dbReference type="InterPro" id="IPR029063">
    <property type="entry name" value="SAM-dependent_MTases_sf"/>
</dbReference>
<dbReference type="NCBIfam" id="NF011650">
    <property type="entry name" value="PRK15068.1"/>
    <property type="match status" value="1"/>
</dbReference>
<dbReference type="NCBIfam" id="TIGR00452">
    <property type="entry name" value="tRNA 5-methoxyuridine(34)/uridine 5-oxyacetic acid(34) synthase CmoB"/>
    <property type="match status" value="1"/>
</dbReference>
<dbReference type="PANTHER" id="PTHR43464">
    <property type="entry name" value="METHYLTRANSFERASE"/>
    <property type="match status" value="1"/>
</dbReference>
<dbReference type="PANTHER" id="PTHR43464:SF95">
    <property type="entry name" value="TRNA U34 CARBOXYMETHYLTRANSFERASE"/>
    <property type="match status" value="1"/>
</dbReference>
<dbReference type="Pfam" id="PF08003">
    <property type="entry name" value="Methyltransf_9"/>
    <property type="match status" value="1"/>
</dbReference>
<dbReference type="SUPFAM" id="SSF53335">
    <property type="entry name" value="S-adenosyl-L-methionine-dependent methyltransferases"/>
    <property type="match status" value="1"/>
</dbReference>
<proteinExistence type="inferred from homology"/>
<organism>
    <name type="scientific">Mannheimia succiniciproducens (strain KCTC 0769BP / MBEL55E)</name>
    <dbReference type="NCBI Taxonomy" id="221988"/>
    <lineage>
        <taxon>Bacteria</taxon>
        <taxon>Pseudomonadati</taxon>
        <taxon>Pseudomonadota</taxon>
        <taxon>Gammaproteobacteria</taxon>
        <taxon>Pasteurellales</taxon>
        <taxon>Pasteurellaceae</taxon>
        <taxon>Basfia</taxon>
    </lineage>
</organism>
<evidence type="ECO:0000255" key="1">
    <source>
        <dbReference type="HAMAP-Rule" id="MF_01590"/>
    </source>
</evidence>
<reference key="1">
    <citation type="journal article" date="2004" name="Nat. Biotechnol.">
        <title>The genome sequence of the capnophilic rumen bacterium Mannheimia succiniciproducens.</title>
        <authorList>
            <person name="Hong S.H."/>
            <person name="Kim J.S."/>
            <person name="Lee S.Y."/>
            <person name="In Y.H."/>
            <person name="Choi S.S."/>
            <person name="Rih J.-K."/>
            <person name="Kim C.H."/>
            <person name="Jeong H."/>
            <person name="Hur C.G."/>
            <person name="Kim J.J."/>
        </authorList>
    </citation>
    <scope>NUCLEOTIDE SEQUENCE [LARGE SCALE GENOMIC DNA]</scope>
    <source>
        <strain>KCTC 0769BP / MBEL55E</strain>
    </source>
</reference>
<comment type="function">
    <text evidence="1">Catalyzes carboxymethyl transfer from carboxy-S-adenosyl-L-methionine (Cx-SAM) to 5-hydroxyuridine (ho5U) to form 5-carboxymethoxyuridine (cmo5U) at position 34 in tRNAs.</text>
</comment>
<comment type="catalytic activity">
    <reaction evidence="1">
        <text>carboxy-S-adenosyl-L-methionine + 5-hydroxyuridine(34) in tRNA = 5-carboxymethoxyuridine(34) in tRNA + S-adenosyl-L-homocysteine + H(+)</text>
        <dbReference type="Rhea" id="RHEA:52848"/>
        <dbReference type="Rhea" id="RHEA-COMP:13381"/>
        <dbReference type="Rhea" id="RHEA-COMP:13383"/>
        <dbReference type="ChEBI" id="CHEBI:15378"/>
        <dbReference type="ChEBI" id="CHEBI:57856"/>
        <dbReference type="ChEBI" id="CHEBI:134278"/>
        <dbReference type="ChEBI" id="CHEBI:136877"/>
        <dbReference type="ChEBI" id="CHEBI:136879"/>
    </reaction>
</comment>
<comment type="subunit">
    <text evidence="1">Homotetramer.</text>
</comment>
<comment type="similarity">
    <text evidence="1">Belongs to the class I-like SAM-binding methyltransferase superfamily. CmoB family.</text>
</comment>
<keyword id="KW-0808">Transferase</keyword>
<keyword id="KW-0819">tRNA processing</keyword>
<feature type="chain" id="PRO_0000313934" description="tRNA U34 carboxymethyltransferase">
    <location>
        <begin position="1"/>
        <end position="321"/>
    </location>
</feature>
<feature type="binding site" evidence="1">
    <location>
        <position position="90"/>
    </location>
    <ligand>
        <name>carboxy-S-adenosyl-L-methionine</name>
        <dbReference type="ChEBI" id="CHEBI:134278"/>
    </ligand>
</feature>
<feature type="binding site" evidence="1">
    <location>
        <position position="104"/>
    </location>
    <ligand>
        <name>carboxy-S-adenosyl-L-methionine</name>
        <dbReference type="ChEBI" id="CHEBI:134278"/>
    </ligand>
</feature>
<feature type="binding site" evidence="1">
    <location>
        <position position="109"/>
    </location>
    <ligand>
        <name>carboxy-S-adenosyl-L-methionine</name>
        <dbReference type="ChEBI" id="CHEBI:134278"/>
    </ligand>
</feature>
<feature type="binding site" evidence="1">
    <location>
        <position position="129"/>
    </location>
    <ligand>
        <name>carboxy-S-adenosyl-L-methionine</name>
        <dbReference type="ChEBI" id="CHEBI:134278"/>
    </ligand>
</feature>
<feature type="binding site" evidence="1">
    <location>
        <begin position="151"/>
        <end position="153"/>
    </location>
    <ligand>
        <name>carboxy-S-adenosyl-L-methionine</name>
        <dbReference type="ChEBI" id="CHEBI:134278"/>
    </ligand>
</feature>
<feature type="binding site" evidence="1">
    <location>
        <begin position="180"/>
        <end position="181"/>
    </location>
    <ligand>
        <name>carboxy-S-adenosyl-L-methionine</name>
        <dbReference type="ChEBI" id="CHEBI:134278"/>
    </ligand>
</feature>
<feature type="binding site" evidence="1">
    <location>
        <position position="195"/>
    </location>
    <ligand>
        <name>carboxy-S-adenosyl-L-methionine</name>
        <dbReference type="ChEBI" id="CHEBI:134278"/>
    </ligand>
</feature>
<feature type="binding site" evidence="1">
    <location>
        <position position="199"/>
    </location>
    <ligand>
        <name>carboxy-S-adenosyl-L-methionine</name>
        <dbReference type="ChEBI" id="CHEBI:134278"/>
    </ligand>
</feature>
<feature type="binding site" evidence="1">
    <location>
        <position position="314"/>
    </location>
    <ligand>
        <name>carboxy-S-adenosyl-L-methionine</name>
        <dbReference type="ChEBI" id="CHEBI:134278"/>
    </ligand>
</feature>
<sequence>MIDFRPFYQQIAVSELSSWLETLPSQLARWQKQTHGEYAKWAKIVDFLPHLKTARIDLKTAVKSEPVSPLSQGEQQRIIYHLKQLMPWRKGPYHLHGIHVDCEWRSDFKWDRVLPHLAPLQDRLILDVGCGSGYHMWRMVGEGAKMVVGIDPTELFLCQFEAVRKLLNNDRRANLIPLGIEEMQPLGVFDTVFSMGVLYHRKSPLDHLSQLKNQLRKGGELVLETLVTDGDEHHVLVPAERYAKMKNVYFIPSVPCLINWLEKSGFSNVRCVDVEVTSLEEQRKTEWLENESLIDFLDPNDHSKTIEGYPAPKRAVILANK</sequence>
<name>CMOB_MANSM</name>
<protein>
    <recommendedName>
        <fullName evidence="1">tRNA U34 carboxymethyltransferase</fullName>
        <ecNumber evidence="1">2.5.1.-</ecNumber>
    </recommendedName>
</protein>
<accession>Q65UH7</accession>
<gene>
    <name evidence="1" type="primary">cmoB</name>
    <name type="ordered locus">MS0776</name>
</gene>